<protein>
    <recommendedName>
        <fullName evidence="1">Polyribonucleotide nucleotidyltransferase</fullName>
        <ecNumber evidence="1">2.7.7.8</ecNumber>
    </recommendedName>
    <alternativeName>
        <fullName evidence="1">Polynucleotide phosphorylase</fullName>
        <shortName evidence="1">PNPase</shortName>
    </alternativeName>
</protein>
<organism>
    <name type="scientific">Pseudomonas aeruginosa (strain UCBPP-PA14)</name>
    <dbReference type="NCBI Taxonomy" id="208963"/>
    <lineage>
        <taxon>Bacteria</taxon>
        <taxon>Pseudomonadati</taxon>
        <taxon>Pseudomonadota</taxon>
        <taxon>Gammaproteobacteria</taxon>
        <taxon>Pseudomonadales</taxon>
        <taxon>Pseudomonadaceae</taxon>
        <taxon>Pseudomonas</taxon>
    </lineage>
</organism>
<gene>
    <name evidence="1" type="primary">pnp</name>
    <name type="ordered locus">PA14_62710</name>
</gene>
<comment type="function">
    <text evidence="1">Involved in mRNA degradation. Catalyzes the phosphorolysis of single-stranded polyribonucleotides processively in the 3'- to 5'-direction.</text>
</comment>
<comment type="catalytic activity">
    <reaction evidence="1">
        <text>RNA(n+1) + phosphate = RNA(n) + a ribonucleoside 5'-diphosphate</text>
        <dbReference type="Rhea" id="RHEA:22096"/>
        <dbReference type="Rhea" id="RHEA-COMP:14527"/>
        <dbReference type="Rhea" id="RHEA-COMP:17342"/>
        <dbReference type="ChEBI" id="CHEBI:43474"/>
        <dbReference type="ChEBI" id="CHEBI:57930"/>
        <dbReference type="ChEBI" id="CHEBI:140395"/>
        <dbReference type="EC" id="2.7.7.8"/>
    </reaction>
</comment>
<comment type="cofactor">
    <cofactor evidence="1">
        <name>Mg(2+)</name>
        <dbReference type="ChEBI" id="CHEBI:18420"/>
    </cofactor>
</comment>
<comment type="subunit">
    <text evidence="1">Component of the RNA degradosome, which is a multiprotein complex involved in RNA processing and mRNA degradation.</text>
</comment>
<comment type="subcellular location">
    <subcellularLocation>
        <location evidence="1">Cytoplasm</location>
    </subcellularLocation>
</comment>
<comment type="similarity">
    <text evidence="1">Belongs to the polyribonucleotide nucleotidyltransferase family.</text>
</comment>
<feature type="chain" id="PRO_0000329779" description="Polyribonucleotide nucleotidyltransferase">
    <location>
        <begin position="1"/>
        <end position="701"/>
    </location>
</feature>
<feature type="domain" description="KH" evidence="1">
    <location>
        <begin position="554"/>
        <end position="613"/>
    </location>
</feature>
<feature type="domain" description="S1 motif" evidence="1">
    <location>
        <begin position="623"/>
        <end position="691"/>
    </location>
</feature>
<feature type="binding site" evidence="1">
    <location>
        <position position="487"/>
    </location>
    <ligand>
        <name>Mg(2+)</name>
        <dbReference type="ChEBI" id="CHEBI:18420"/>
    </ligand>
</feature>
<feature type="binding site" evidence="1">
    <location>
        <position position="493"/>
    </location>
    <ligand>
        <name>Mg(2+)</name>
        <dbReference type="ChEBI" id="CHEBI:18420"/>
    </ligand>
</feature>
<sequence>MNPVTKQFQFGQSTVTLETGRIARQATGAVLVTMDDVSVLVTVVGAKSPAEGRDFFPLSVHYQEKTYAAGRIPGGFFKREGRPSEKETLTSRLIDRPIRPLFPEGFMNEVQVVCTVVSTNKKSDPDIAAMIGTSAALAISGIPFAGPIGAARVGFHPEIGYILNPTYEQLQSSSLDMVVAGTEDAVLMVESEADELTEDQMLGAVLFAHDEFQAVIRAVKELAAEAGKPAWDWKAPAENTVLVNAIKAELGEAISQAYTITIKQDRYNRLGELRDQAVALFAGEEEGKFPASEVKDVFGLLEYRTVRENIVNGKPRIDGRDTRTVRPLRIEVGVLGKTHGSALFTRGETQALVVATLGTARDAQLLDTLEGERKDAFMLHYNFPPFSVGECGRMGSPGRREIGHGRLARRGVAAMLPTQDEFPYTIRVVSEITESNGSSSMASVCGASLALMDAGVPVKAPVAGIAMGLVKEGEKFAVLTDILGDEDHLGDMDFKVAGTDKGVTALQMDIKINGITEEIMEIALGQALEARLNILGQMNQVIAKPRAELSENAPTMLQMKIDSDKIRDVIGKGGATIRGICEETKASIDIEDDGSVKIYGETKEAAEAAKLRVLAITAEAEIGKIYVGKVERIVDFGAFVNILPGKDGLVHISQISDKRIDKVTDVLQEGQEVKVLVLDVDNRGRIKLSIKDVAAAEASGV</sequence>
<reference key="1">
    <citation type="journal article" date="2006" name="Genome Biol.">
        <title>Genomic analysis reveals that Pseudomonas aeruginosa virulence is combinatorial.</title>
        <authorList>
            <person name="Lee D.G."/>
            <person name="Urbach J.M."/>
            <person name="Wu G."/>
            <person name="Liberati N.T."/>
            <person name="Feinbaum R.L."/>
            <person name="Miyata S."/>
            <person name="Diggins L.T."/>
            <person name="He J."/>
            <person name="Saucier M."/>
            <person name="Deziel E."/>
            <person name="Friedman L."/>
            <person name="Li L."/>
            <person name="Grills G."/>
            <person name="Montgomery K."/>
            <person name="Kucherlapati R."/>
            <person name="Rahme L.G."/>
            <person name="Ausubel F.M."/>
        </authorList>
    </citation>
    <scope>NUCLEOTIDE SEQUENCE [LARGE SCALE GENOMIC DNA]</scope>
    <source>
        <strain>UCBPP-PA14</strain>
    </source>
</reference>
<name>PNP_PSEAB</name>
<evidence type="ECO:0000255" key="1">
    <source>
        <dbReference type="HAMAP-Rule" id="MF_01595"/>
    </source>
</evidence>
<proteinExistence type="inferred from homology"/>
<accession>Q02FT2</accession>
<keyword id="KW-0963">Cytoplasm</keyword>
<keyword id="KW-0460">Magnesium</keyword>
<keyword id="KW-0479">Metal-binding</keyword>
<keyword id="KW-0548">Nucleotidyltransferase</keyword>
<keyword id="KW-0694">RNA-binding</keyword>
<keyword id="KW-0808">Transferase</keyword>
<dbReference type="EC" id="2.7.7.8" evidence="1"/>
<dbReference type="EMBL" id="CP000438">
    <property type="protein sequence ID" value="ABJ14123.1"/>
    <property type="molecule type" value="Genomic_DNA"/>
</dbReference>
<dbReference type="RefSeq" id="WP_003095181.1">
    <property type="nucleotide sequence ID" value="NZ_CP034244.1"/>
</dbReference>
<dbReference type="SMR" id="Q02FT2"/>
<dbReference type="KEGG" id="pau:PA14_62710"/>
<dbReference type="PseudoCAP" id="PA14_62710"/>
<dbReference type="HOGENOM" id="CLU_004217_2_2_6"/>
<dbReference type="BioCyc" id="PAER208963:G1G74-5302-MONOMER"/>
<dbReference type="Proteomes" id="UP000000653">
    <property type="component" value="Chromosome"/>
</dbReference>
<dbReference type="GO" id="GO:0005829">
    <property type="term" value="C:cytosol"/>
    <property type="evidence" value="ECO:0007669"/>
    <property type="project" value="TreeGrafter"/>
</dbReference>
<dbReference type="GO" id="GO:0000175">
    <property type="term" value="F:3'-5'-RNA exonuclease activity"/>
    <property type="evidence" value="ECO:0007669"/>
    <property type="project" value="TreeGrafter"/>
</dbReference>
<dbReference type="GO" id="GO:0000287">
    <property type="term" value="F:magnesium ion binding"/>
    <property type="evidence" value="ECO:0007669"/>
    <property type="project" value="UniProtKB-UniRule"/>
</dbReference>
<dbReference type="GO" id="GO:0004654">
    <property type="term" value="F:polyribonucleotide nucleotidyltransferase activity"/>
    <property type="evidence" value="ECO:0007669"/>
    <property type="project" value="UniProtKB-UniRule"/>
</dbReference>
<dbReference type="GO" id="GO:0003723">
    <property type="term" value="F:RNA binding"/>
    <property type="evidence" value="ECO:0007669"/>
    <property type="project" value="UniProtKB-UniRule"/>
</dbReference>
<dbReference type="GO" id="GO:0006402">
    <property type="term" value="P:mRNA catabolic process"/>
    <property type="evidence" value="ECO:0007669"/>
    <property type="project" value="UniProtKB-UniRule"/>
</dbReference>
<dbReference type="GO" id="GO:0006396">
    <property type="term" value="P:RNA processing"/>
    <property type="evidence" value="ECO:0007669"/>
    <property type="project" value="InterPro"/>
</dbReference>
<dbReference type="CDD" id="cd02393">
    <property type="entry name" value="KH-I_PNPase"/>
    <property type="match status" value="1"/>
</dbReference>
<dbReference type="CDD" id="cd11363">
    <property type="entry name" value="RNase_PH_PNPase_1"/>
    <property type="match status" value="1"/>
</dbReference>
<dbReference type="CDD" id="cd11364">
    <property type="entry name" value="RNase_PH_PNPase_2"/>
    <property type="match status" value="1"/>
</dbReference>
<dbReference type="CDD" id="cd04472">
    <property type="entry name" value="S1_PNPase"/>
    <property type="match status" value="1"/>
</dbReference>
<dbReference type="FunFam" id="2.40.50.140:FF:000023">
    <property type="entry name" value="Polyribonucleotide nucleotidyltransferase"/>
    <property type="match status" value="1"/>
</dbReference>
<dbReference type="FunFam" id="3.30.1370.10:FF:000001">
    <property type="entry name" value="Polyribonucleotide nucleotidyltransferase"/>
    <property type="match status" value="1"/>
</dbReference>
<dbReference type="FunFam" id="3.30.230.70:FF:000001">
    <property type="entry name" value="Polyribonucleotide nucleotidyltransferase"/>
    <property type="match status" value="1"/>
</dbReference>
<dbReference type="FunFam" id="3.30.230.70:FF:000002">
    <property type="entry name" value="Polyribonucleotide nucleotidyltransferase"/>
    <property type="match status" value="1"/>
</dbReference>
<dbReference type="Gene3D" id="3.30.230.70">
    <property type="entry name" value="GHMP Kinase, N-terminal domain"/>
    <property type="match status" value="2"/>
</dbReference>
<dbReference type="Gene3D" id="3.30.1370.10">
    <property type="entry name" value="K Homology domain, type 1"/>
    <property type="match status" value="1"/>
</dbReference>
<dbReference type="Gene3D" id="2.40.50.140">
    <property type="entry name" value="Nucleic acid-binding proteins"/>
    <property type="match status" value="1"/>
</dbReference>
<dbReference type="HAMAP" id="MF_01595">
    <property type="entry name" value="PNPase"/>
    <property type="match status" value="1"/>
</dbReference>
<dbReference type="InterPro" id="IPR001247">
    <property type="entry name" value="ExoRNase_PH_dom1"/>
</dbReference>
<dbReference type="InterPro" id="IPR015847">
    <property type="entry name" value="ExoRNase_PH_dom2"/>
</dbReference>
<dbReference type="InterPro" id="IPR036345">
    <property type="entry name" value="ExoRNase_PH_dom2_sf"/>
</dbReference>
<dbReference type="InterPro" id="IPR004087">
    <property type="entry name" value="KH_dom"/>
</dbReference>
<dbReference type="InterPro" id="IPR004088">
    <property type="entry name" value="KH_dom_type_1"/>
</dbReference>
<dbReference type="InterPro" id="IPR036612">
    <property type="entry name" value="KH_dom_type_1_sf"/>
</dbReference>
<dbReference type="InterPro" id="IPR012340">
    <property type="entry name" value="NA-bd_OB-fold"/>
</dbReference>
<dbReference type="InterPro" id="IPR012162">
    <property type="entry name" value="PNPase"/>
</dbReference>
<dbReference type="InterPro" id="IPR027408">
    <property type="entry name" value="PNPase/RNase_PH_dom_sf"/>
</dbReference>
<dbReference type="InterPro" id="IPR015848">
    <property type="entry name" value="PNPase_PH_RNA-bd_bac/org-type"/>
</dbReference>
<dbReference type="InterPro" id="IPR020568">
    <property type="entry name" value="Ribosomal_Su5_D2-typ_SF"/>
</dbReference>
<dbReference type="InterPro" id="IPR003029">
    <property type="entry name" value="S1_domain"/>
</dbReference>
<dbReference type="NCBIfam" id="TIGR03591">
    <property type="entry name" value="polynuc_phos"/>
    <property type="match status" value="1"/>
</dbReference>
<dbReference type="NCBIfam" id="NF008805">
    <property type="entry name" value="PRK11824.1"/>
    <property type="match status" value="1"/>
</dbReference>
<dbReference type="PANTHER" id="PTHR11252">
    <property type="entry name" value="POLYRIBONUCLEOTIDE NUCLEOTIDYLTRANSFERASE"/>
    <property type="match status" value="1"/>
</dbReference>
<dbReference type="PANTHER" id="PTHR11252:SF0">
    <property type="entry name" value="POLYRIBONUCLEOTIDE NUCLEOTIDYLTRANSFERASE 1, MITOCHONDRIAL"/>
    <property type="match status" value="1"/>
</dbReference>
<dbReference type="Pfam" id="PF00013">
    <property type="entry name" value="KH_1"/>
    <property type="match status" value="1"/>
</dbReference>
<dbReference type="Pfam" id="PF03726">
    <property type="entry name" value="PNPase"/>
    <property type="match status" value="1"/>
</dbReference>
<dbReference type="Pfam" id="PF01138">
    <property type="entry name" value="RNase_PH"/>
    <property type="match status" value="2"/>
</dbReference>
<dbReference type="Pfam" id="PF03725">
    <property type="entry name" value="RNase_PH_C"/>
    <property type="match status" value="2"/>
</dbReference>
<dbReference type="Pfam" id="PF00575">
    <property type="entry name" value="S1"/>
    <property type="match status" value="1"/>
</dbReference>
<dbReference type="PIRSF" id="PIRSF005499">
    <property type="entry name" value="PNPase"/>
    <property type="match status" value="1"/>
</dbReference>
<dbReference type="SMART" id="SM00322">
    <property type="entry name" value="KH"/>
    <property type="match status" value="1"/>
</dbReference>
<dbReference type="SMART" id="SM00316">
    <property type="entry name" value="S1"/>
    <property type="match status" value="1"/>
</dbReference>
<dbReference type="SUPFAM" id="SSF54791">
    <property type="entry name" value="Eukaryotic type KH-domain (KH-domain type I)"/>
    <property type="match status" value="1"/>
</dbReference>
<dbReference type="SUPFAM" id="SSF50249">
    <property type="entry name" value="Nucleic acid-binding proteins"/>
    <property type="match status" value="1"/>
</dbReference>
<dbReference type="SUPFAM" id="SSF55666">
    <property type="entry name" value="Ribonuclease PH domain 2-like"/>
    <property type="match status" value="2"/>
</dbReference>
<dbReference type="SUPFAM" id="SSF54211">
    <property type="entry name" value="Ribosomal protein S5 domain 2-like"/>
    <property type="match status" value="2"/>
</dbReference>
<dbReference type="PROSITE" id="PS50084">
    <property type="entry name" value="KH_TYPE_1"/>
    <property type="match status" value="1"/>
</dbReference>
<dbReference type="PROSITE" id="PS50126">
    <property type="entry name" value="S1"/>
    <property type="match status" value="1"/>
</dbReference>